<proteinExistence type="evidence at transcript level"/>
<sequence>MKGFIVFSLSLCLVFTVCLAEDELMKEAVRKFLKCVACAEPGSELRTEYHKCSELKPERLKATMKACCDETMPAGSDEDARWALVCADDGILTKVCDCVKAKLPMAEVTTAEMEQFSKYKECAKKLNEEKCK</sequence>
<feature type="signal peptide" evidence="1">
    <location>
        <begin position="1"/>
        <end position="20"/>
    </location>
</feature>
<feature type="propeptide" id="PRO_0000459674" evidence="4">
    <location>
        <begin position="21"/>
        <end position="30"/>
    </location>
</feature>
<feature type="chain" id="PRO_5008897072" description="U10-hexatoxin-Hi1a" evidence="4">
    <location>
        <begin position="31"/>
        <end position="132"/>
    </location>
</feature>
<name>TA1A_HADIN</name>
<evidence type="ECO:0000255" key="1"/>
<evidence type="ECO:0000303" key="2">
    <source>
    </source>
</evidence>
<evidence type="ECO:0000305" key="3"/>
<evidence type="ECO:0000305" key="4">
    <source>
    </source>
</evidence>
<evidence type="ECO:0000312" key="5">
    <source>
        <dbReference type="EMBL" id="CDZ18866.1"/>
    </source>
</evidence>
<reference key="1">
    <citation type="journal article" date="2020" name="Proc. Natl. Acad. Sci. U.S.A.">
        <title>Structural venomics reveals evolution of a complex venom by duplication and diversification of an ancient peptide-encoding gene.</title>
        <authorList>
            <person name="Pineda S.S."/>
            <person name="Chin Y.K."/>
            <person name="Undheim E.A.B."/>
            <person name="Senff S."/>
            <person name="Mobli M."/>
            <person name="Dauly C."/>
            <person name="Escoubas P."/>
            <person name="Nicholson G.M."/>
            <person name="Kaas Q."/>
            <person name="Guo S."/>
            <person name="Herzig V."/>
            <person name="Mattick J.S."/>
            <person name="King G.F."/>
        </authorList>
    </citation>
    <scope>NUCLEOTIDE SEQUENCE [MRNA]</scope>
    <source>
        <tissue>Venom gland</tissue>
    </source>
</reference>
<reference evidence="5" key="2">
    <citation type="thesis" date="2012" institute="The University of Queensland" country="Australia">
        <title>Probing the chemical diversity of venom from the Australian Funnel-web spider Hadronyche infensa.</title>
        <authorList>
            <person name="Pineda S.S."/>
        </authorList>
    </citation>
    <scope>NUCLEOTIDE SEQUENCE [MRNA]</scope>
    <source>
        <tissue>Venom gland</tissue>
    </source>
</reference>
<reference evidence="5" key="3">
    <citation type="submission" date="2014-07" db="EMBL/GenBank/DDBJ databases">
        <authorList>
            <person name="Zhang J.E."/>
            <person name="Yang H."/>
            <person name="Guo J."/>
            <person name="Deng Z."/>
            <person name="Luo H."/>
            <person name="Luo M."/>
            <person name="Zhao B."/>
        </authorList>
    </citation>
    <scope>NUCLEOTIDE SEQUENCE [MRNA]</scope>
    <source>
        <tissue>Venom gland</tissue>
    </source>
</reference>
<accession>A0A1D0C0W1</accession>
<keyword id="KW-1015">Disulfide bond</keyword>
<keyword id="KW-0872">Ion channel impairing toxin</keyword>
<keyword id="KW-0964">Secreted</keyword>
<keyword id="KW-0732">Signal</keyword>
<keyword id="KW-0800">Toxin</keyword>
<comment type="function">
    <text evidence="3">Probable ion channel inhibitor.</text>
</comment>
<comment type="subcellular location">
    <subcellularLocation>
        <location evidence="4">Secreted</location>
    </subcellularLocation>
</comment>
<comment type="tissue specificity">
    <text evidence="4">Expressed by the venom gland.</text>
</comment>
<comment type="PTM">
    <text evidence="4">Contains 5 disulfide bonds.</text>
</comment>
<organism evidence="5">
    <name type="scientific">Hadronyche infensa</name>
    <name type="common">Fraser island funnel-web spider</name>
    <name type="synonym">Atrax infensus</name>
    <dbReference type="NCBI Taxonomy" id="153481"/>
    <lineage>
        <taxon>Eukaryota</taxon>
        <taxon>Metazoa</taxon>
        <taxon>Ecdysozoa</taxon>
        <taxon>Arthropoda</taxon>
        <taxon>Chelicerata</taxon>
        <taxon>Arachnida</taxon>
        <taxon>Araneae</taxon>
        <taxon>Mygalomorphae</taxon>
        <taxon>Hexathelidae</taxon>
        <taxon>Hadronyche</taxon>
    </lineage>
</organism>
<dbReference type="EMBL" id="HACE01000082">
    <property type="protein sequence ID" value="CDZ18866.1"/>
    <property type="molecule type" value="mRNA"/>
</dbReference>
<dbReference type="GO" id="GO:0005576">
    <property type="term" value="C:extracellular region"/>
    <property type="evidence" value="ECO:0007669"/>
    <property type="project" value="UniProtKB-SubCell"/>
</dbReference>
<dbReference type="GO" id="GO:0099106">
    <property type="term" value="F:ion channel regulator activity"/>
    <property type="evidence" value="ECO:0007669"/>
    <property type="project" value="UniProtKB-KW"/>
</dbReference>
<dbReference type="GO" id="GO:0090729">
    <property type="term" value="F:toxin activity"/>
    <property type="evidence" value="ECO:0007669"/>
    <property type="project" value="UniProtKB-KW"/>
</dbReference>
<protein>
    <recommendedName>
        <fullName evidence="5">U10-hexatoxin-Hi1a</fullName>
        <shortName evidence="3">U10-HXTX-Hi1a</shortName>
    </recommendedName>
    <alternativeName>
        <fullName evidence="2">SF15 peptide</fullName>
    </alternativeName>
</protein>